<accession>A5F5K1</accession>
<accession>C3M4R9</accession>
<organism>
    <name type="scientific">Vibrio cholerae serotype O1 (strain ATCC 39541 / Classical Ogawa 395 / O395)</name>
    <dbReference type="NCBI Taxonomy" id="345073"/>
    <lineage>
        <taxon>Bacteria</taxon>
        <taxon>Pseudomonadati</taxon>
        <taxon>Pseudomonadota</taxon>
        <taxon>Gammaproteobacteria</taxon>
        <taxon>Vibrionales</taxon>
        <taxon>Vibrionaceae</taxon>
        <taxon>Vibrio</taxon>
    </lineage>
</organism>
<evidence type="ECO:0000255" key="1">
    <source>
        <dbReference type="HAMAP-Rule" id="MF_01092"/>
    </source>
</evidence>
<keyword id="KW-0131">Cell cycle</keyword>
<keyword id="KW-0132">Cell division</keyword>
<keyword id="KW-0963">Cytoplasm</keyword>
<keyword id="KW-0717">Septation</keyword>
<feature type="chain" id="PRO_1000073027" description="Cell division protein ZapD">
    <location>
        <begin position="1"/>
        <end position="246"/>
    </location>
</feature>
<reference key="1">
    <citation type="submission" date="2007-03" db="EMBL/GenBank/DDBJ databases">
        <authorList>
            <person name="Heidelberg J."/>
        </authorList>
    </citation>
    <scope>NUCLEOTIDE SEQUENCE [LARGE SCALE GENOMIC DNA]</scope>
    <source>
        <strain>ATCC 39541 / Classical Ogawa 395 / O395</strain>
    </source>
</reference>
<reference key="2">
    <citation type="journal article" date="2008" name="PLoS ONE">
        <title>A recalibrated molecular clock and independent origins for the cholera pandemic clones.</title>
        <authorList>
            <person name="Feng L."/>
            <person name="Reeves P.R."/>
            <person name="Lan R."/>
            <person name="Ren Y."/>
            <person name="Gao C."/>
            <person name="Zhou Z."/>
            <person name="Ren Y."/>
            <person name="Cheng J."/>
            <person name="Wang W."/>
            <person name="Wang J."/>
            <person name="Qian W."/>
            <person name="Li D."/>
            <person name="Wang L."/>
        </authorList>
    </citation>
    <scope>NUCLEOTIDE SEQUENCE [LARGE SCALE GENOMIC DNA]</scope>
    <source>
        <strain>ATCC 39541 / Classical Ogawa 395 / O395</strain>
    </source>
</reference>
<name>ZAPD_VIBC3</name>
<gene>
    <name evidence="1" type="primary">zapD</name>
    <name type="ordered locus">VC0395_A2005</name>
    <name type="ordered locus">VC395_2543</name>
</gene>
<protein>
    <recommendedName>
        <fullName evidence="1">Cell division protein ZapD</fullName>
    </recommendedName>
    <alternativeName>
        <fullName evidence="1">Z ring-associated protein D</fullName>
    </alternativeName>
</protein>
<sequence length="246" mass="28841">MTTHQFEHPLNEKTRIYLRVEALLNQMERASTFSDGIQHQLFFRSLFDMLEIFEQIQLKSELAKDMEKQRLTYRSWLHVEGVDQEMLNSLLTEVDEVHRDLMSAERFGQSLKEDRFLSAIRQRFNLPGGSCCFDLPALHYWLHLPLDRKMRDAQQWMQTVTPLSNALKLWLKLTRETGHYRSRMASNGFYQSDAEDANILRLAIPLEYGVYPMISGHKNRFAIKFIDFHSGQACTQDIAFDLAVCC</sequence>
<proteinExistence type="inferred from homology"/>
<dbReference type="EMBL" id="CP000627">
    <property type="protein sequence ID" value="ABQ21319.1"/>
    <property type="molecule type" value="Genomic_DNA"/>
</dbReference>
<dbReference type="EMBL" id="CP001235">
    <property type="protein sequence ID" value="ACP10530.1"/>
    <property type="molecule type" value="Genomic_DNA"/>
</dbReference>
<dbReference type="RefSeq" id="WP_000207198.1">
    <property type="nucleotide sequence ID" value="NZ_JAACZH010000010.1"/>
</dbReference>
<dbReference type="SMR" id="A5F5K1"/>
<dbReference type="KEGG" id="vco:VC0395_A2005"/>
<dbReference type="KEGG" id="vcr:VC395_2543"/>
<dbReference type="PATRIC" id="fig|345073.21.peg.2445"/>
<dbReference type="eggNOG" id="COG4582">
    <property type="taxonomic scope" value="Bacteria"/>
</dbReference>
<dbReference type="HOGENOM" id="CLU_076303_0_0_6"/>
<dbReference type="OrthoDB" id="5294622at2"/>
<dbReference type="Proteomes" id="UP000000249">
    <property type="component" value="Chromosome 2"/>
</dbReference>
<dbReference type="GO" id="GO:0032153">
    <property type="term" value="C:cell division site"/>
    <property type="evidence" value="ECO:0007669"/>
    <property type="project" value="TreeGrafter"/>
</dbReference>
<dbReference type="GO" id="GO:0005737">
    <property type="term" value="C:cytoplasm"/>
    <property type="evidence" value="ECO:0007669"/>
    <property type="project" value="UniProtKB-SubCell"/>
</dbReference>
<dbReference type="GO" id="GO:0000917">
    <property type="term" value="P:division septum assembly"/>
    <property type="evidence" value="ECO:0007669"/>
    <property type="project" value="UniProtKB-KW"/>
</dbReference>
<dbReference type="GO" id="GO:0043093">
    <property type="term" value="P:FtsZ-dependent cytokinesis"/>
    <property type="evidence" value="ECO:0007669"/>
    <property type="project" value="UniProtKB-UniRule"/>
</dbReference>
<dbReference type="Gene3D" id="1.10.3900.10">
    <property type="entry name" value="YacF-like"/>
    <property type="match status" value="1"/>
</dbReference>
<dbReference type="Gene3D" id="2.60.440.10">
    <property type="entry name" value="YacF-like domains"/>
    <property type="match status" value="1"/>
</dbReference>
<dbReference type="HAMAP" id="MF_01092">
    <property type="entry name" value="ZapD"/>
    <property type="match status" value="1"/>
</dbReference>
<dbReference type="InterPro" id="IPR009777">
    <property type="entry name" value="ZapD"/>
</dbReference>
<dbReference type="InterPro" id="IPR027462">
    <property type="entry name" value="ZapD_C"/>
</dbReference>
<dbReference type="InterPro" id="IPR036268">
    <property type="entry name" value="ZapD_sf"/>
</dbReference>
<dbReference type="NCBIfam" id="NF003655">
    <property type="entry name" value="PRK05287.1-3"/>
    <property type="match status" value="1"/>
</dbReference>
<dbReference type="PANTHER" id="PTHR39455">
    <property type="entry name" value="CELL DIVISION PROTEIN ZAPD"/>
    <property type="match status" value="1"/>
</dbReference>
<dbReference type="PANTHER" id="PTHR39455:SF1">
    <property type="entry name" value="CELL DIVISION PROTEIN ZAPD"/>
    <property type="match status" value="1"/>
</dbReference>
<dbReference type="Pfam" id="PF07072">
    <property type="entry name" value="ZapD"/>
    <property type="match status" value="1"/>
</dbReference>
<dbReference type="SUPFAM" id="SSF160950">
    <property type="entry name" value="YacF-like"/>
    <property type="match status" value="1"/>
</dbReference>
<comment type="function">
    <text evidence="1">Cell division factor that enhances FtsZ-ring assembly. Directly interacts with FtsZ and promotes bundling of FtsZ protofilaments, with a reduction in FtsZ GTPase activity.</text>
</comment>
<comment type="subunit">
    <text evidence="1">Interacts with FtsZ.</text>
</comment>
<comment type="subcellular location">
    <subcellularLocation>
        <location evidence="1">Cytoplasm</location>
    </subcellularLocation>
    <text evidence="1">Localizes to mid-cell in an FtsZ-dependent manner.</text>
</comment>
<comment type="similarity">
    <text evidence="1">Belongs to the ZapD family.</text>
</comment>